<keyword id="KW-0002">3D-structure</keyword>
<keyword id="KW-0539">Nucleus</keyword>
<keyword id="KW-1185">Reference proteome</keyword>
<keyword id="KW-0687">Ribonucleoprotein</keyword>
<keyword id="KW-0690">Ribosome biogenesis</keyword>
<keyword id="KW-0698">rRNA processing</keyword>
<reference key="1">
    <citation type="journal article" date="2002" name="Nature">
        <title>The genome sequence of Schizosaccharomyces pombe.</title>
        <authorList>
            <person name="Wood V."/>
            <person name="Gwilliam R."/>
            <person name="Rajandream M.A."/>
            <person name="Lyne M.H."/>
            <person name="Lyne R."/>
            <person name="Stewart A."/>
            <person name="Sgouros J.G."/>
            <person name="Peat N."/>
            <person name="Hayles J."/>
            <person name="Baker S.G."/>
            <person name="Basham D."/>
            <person name="Bowman S."/>
            <person name="Brooks K."/>
            <person name="Brown D."/>
            <person name="Brown S."/>
            <person name="Chillingworth T."/>
            <person name="Churcher C.M."/>
            <person name="Collins M."/>
            <person name="Connor R."/>
            <person name="Cronin A."/>
            <person name="Davis P."/>
            <person name="Feltwell T."/>
            <person name="Fraser A."/>
            <person name="Gentles S."/>
            <person name="Goble A."/>
            <person name="Hamlin N."/>
            <person name="Harris D.E."/>
            <person name="Hidalgo J."/>
            <person name="Hodgson G."/>
            <person name="Holroyd S."/>
            <person name="Hornsby T."/>
            <person name="Howarth S."/>
            <person name="Huckle E.J."/>
            <person name="Hunt S."/>
            <person name="Jagels K."/>
            <person name="James K.D."/>
            <person name="Jones L."/>
            <person name="Jones M."/>
            <person name="Leather S."/>
            <person name="McDonald S."/>
            <person name="McLean J."/>
            <person name="Mooney P."/>
            <person name="Moule S."/>
            <person name="Mungall K.L."/>
            <person name="Murphy L.D."/>
            <person name="Niblett D."/>
            <person name="Odell C."/>
            <person name="Oliver K."/>
            <person name="O'Neil S."/>
            <person name="Pearson D."/>
            <person name="Quail M.A."/>
            <person name="Rabbinowitsch E."/>
            <person name="Rutherford K.M."/>
            <person name="Rutter S."/>
            <person name="Saunders D."/>
            <person name="Seeger K."/>
            <person name="Sharp S."/>
            <person name="Skelton J."/>
            <person name="Simmonds M.N."/>
            <person name="Squares R."/>
            <person name="Squares S."/>
            <person name="Stevens K."/>
            <person name="Taylor K."/>
            <person name="Taylor R.G."/>
            <person name="Tivey A."/>
            <person name="Walsh S.V."/>
            <person name="Warren T."/>
            <person name="Whitehead S."/>
            <person name="Woodward J.R."/>
            <person name="Volckaert G."/>
            <person name="Aert R."/>
            <person name="Robben J."/>
            <person name="Grymonprez B."/>
            <person name="Weltjens I."/>
            <person name="Vanstreels E."/>
            <person name="Rieger M."/>
            <person name="Schaefer M."/>
            <person name="Mueller-Auer S."/>
            <person name="Gabel C."/>
            <person name="Fuchs M."/>
            <person name="Duesterhoeft A."/>
            <person name="Fritzc C."/>
            <person name="Holzer E."/>
            <person name="Moestl D."/>
            <person name="Hilbert H."/>
            <person name="Borzym K."/>
            <person name="Langer I."/>
            <person name="Beck A."/>
            <person name="Lehrach H."/>
            <person name="Reinhardt R."/>
            <person name="Pohl T.M."/>
            <person name="Eger P."/>
            <person name="Zimmermann W."/>
            <person name="Wedler H."/>
            <person name="Wambutt R."/>
            <person name="Purnelle B."/>
            <person name="Goffeau A."/>
            <person name="Cadieu E."/>
            <person name="Dreano S."/>
            <person name="Gloux S."/>
            <person name="Lelaure V."/>
            <person name="Mottier S."/>
            <person name="Galibert F."/>
            <person name="Aves S.J."/>
            <person name="Xiang Z."/>
            <person name="Hunt C."/>
            <person name="Moore K."/>
            <person name="Hurst S.M."/>
            <person name="Lucas M."/>
            <person name="Rochet M."/>
            <person name="Gaillardin C."/>
            <person name="Tallada V.A."/>
            <person name="Garzon A."/>
            <person name="Thode G."/>
            <person name="Daga R.R."/>
            <person name="Cruzado L."/>
            <person name="Jimenez J."/>
            <person name="Sanchez M."/>
            <person name="del Rey F."/>
            <person name="Benito J."/>
            <person name="Dominguez A."/>
            <person name="Revuelta J.L."/>
            <person name="Moreno S."/>
            <person name="Armstrong J."/>
            <person name="Forsburg S.L."/>
            <person name="Cerutti L."/>
            <person name="Lowe T."/>
            <person name="McCombie W.R."/>
            <person name="Paulsen I."/>
            <person name="Potashkin J."/>
            <person name="Shpakovski G.V."/>
            <person name="Ussery D."/>
            <person name="Barrell B.G."/>
            <person name="Nurse P."/>
        </authorList>
    </citation>
    <scope>NUCLEOTIDE SEQUENCE [LARGE SCALE GENOMIC DNA]</scope>
    <source>
        <strain>972 / ATCC 24843</strain>
    </source>
</reference>
<comment type="function">
    <text evidence="1">Involved in the biogenesis of the 60S ribosomal subunit.</text>
</comment>
<comment type="subunit">
    <text evidence="1">Component of the pre-66S ribosomal particle.</text>
</comment>
<comment type="subcellular location">
    <subcellularLocation>
        <location evidence="1">Nucleus</location>
        <location evidence="1">Nucleolus</location>
    </subcellularLocation>
</comment>
<comment type="similarity">
    <text evidence="3">Belongs to the NOP16 family.</text>
</comment>
<feature type="chain" id="PRO_0000320385" description="Nucleolar protein 16">
    <location>
        <begin position="1"/>
        <end position="209"/>
    </location>
</feature>
<feature type="region of interest" description="Disordered" evidence="2">
    <location>
        <begin position="1"/>
        <end position="24"/>
    </location>
</feature>
<feature type="helix" evidence="4">
    <location>
        <begin position="4"/>
        <end position="11"/>
    </location>
</feature>
<feature type="strand" evidence="4">
    <location>
        <begin position="12"/>
        <end position="14"/>
    </location>
</feature>
<feature type="helix" evidence="4">
    <location>
        <begin position="34"/>
        <end position="39"/>
    </location>
</feature>
<feature type="strand" evidence="4">
    <location>
        <begin position="42"/>
        <end position="44"/>
    </location>
</feature>
<feature type="helix" evidence="4">
    <location>
        <begin position="46"/>
        <end position="52"/>
    </location>
</feature>
<feature type="helix" evidence="4">
    <location>
        <begin position="121"/>
        <end position="124"/>
    </location>
</feature>
<feature type="helix" evidence="4">
    <location>
        <begin position="136"/>
        <end position="151"/>
    </location>
</feature>
<feature type="helix" evidence="4">
    <location>
        <begin position="161"/>
        <end position="174"/>
    </location>
</feature>
<feature type="turn" evidence="5">
    <location>
        <begin position="175"/>
        <end position="177"/>
    </location>
</feature>
<feature type="helix" evidence="4">
    <location>
        <begin position="180"/>
        <end position="184"/>
    </location>
</feature>
<feature type="strand" evidence="4">
    <location>
        <begin position="186"/>
        <end position="188"/>
    </location>
</feature>
<feature type="helix" evidence="4">
    <location>
        <begin position="195"/>
        <end position="206"/>
    </location>
</feature>
<protein>
    <recommendedName>
        <fullName>Nucleolar protein 16</fullName>
    </recommendedName>
</protein>
<dbReference type="EMBL" id="CU329671">
    <property type="protein sequence ID" value="CAB51342.1"/>
    <property type="molecule type" value="Genomic_DNA"/>
</dbReference>
<dbReference type="PIR" id="T39469">
    <property type="entry name" value="T39469"/>
</dbReference>
<dbReference type="RefSeq" id="NP_596824.1">
    <property type="nucleotide sequence ID" value="NM_001023844.2"/>
</dbReference>
<dbReference type="PDB" id="8ESQ">
    <property type="method" value="EM"/>
    <property type="resolution" value="2.80 A"/>
    <property type="chains" value="v=1-209"/>
</dbReference>
<dbReference type="PDB" id="8ESR">
    <property type="method" value="EM"/>
    <property type="resolution" value="3.20 A"/>
    <property type="chains" value="v=1-209"/>
</dbReference>
<dbReference type="PDB" id="8ETG">
    <property type="method" value="EM"/>
    <property type="resolution" value="3.40 A"/>
    <property type="chains" value="v=1-209"/>
</dbReference>
<dbReference type="PDB" id="8ETH">
    <property type="method" value="EM"/>
    <property type="resolution" value="3.80 A"/>
    <property type="chains" value="v=1-209"/>
</dbReference>
<dbReference type="PDB" id="8ETI">
    <property type="method" value="EM"/>
    <property type="resolution" value="3.70 A"/>
    <property type="chains" value="v=1-209"/>
</dbReference>
<dbReference type="PDB" id="8EUP">
    <property type="method" value="EM"/>
    <property type="resolution" value="3.10 A"/>
    <property type="chains" value="v=1-209"/>
</dbReference>
<dbReference type="PDB" id="8EUY">
    <property type="method" value="EM"/>
    <property type="resolution" value="3.00 A"/>
    <property type="chains" value="v=1-209"/>
</dbReference>
<dbReference type="PDB" id="8EV3">
    <property type="method" value="EM"/>
    <property type="resolution" value="3.00 A"/>
    <property type="chains" value="v=1-209"/>
</dbReference>
<dbReference type="PDBsum" id="8ESQ"/>
<dbReference type="PDBsum" id="8ESR"/>
<dbReference type="PDBsum" id="8ETG"/>
<dbReference type="PDBsum" id="8ETH"/>
<dbReference type="PDBsum" id="8ETI"/>
<dbReference type="PDBsum" id="8EUP"/>
<dbReference type="PDBsum" id="8EUY"/>
<dbReference type="PDBsum" id="8EV3"/>
<dbReference type="SMR" id="Q9Y7Z1"/>
<dbReference type="BioGRID" id="276439">
    <property type="interactions" value="20"/>
</dbReference>
<dbReference type="FunCoup" id="Q9Y7Z1">
    <property type="interactions" value="149"/>
</dbReference>
<dbReference type="STRING" id="284812.Q9Y7Z1"/>
<dbReference type="iPTMnet" id="Q9Y7Z1"/>
<dbReference type="PaxDb" id="4896-SPBC1539.10.1"/>
<dbReference type="EnsemblFungi" id="SPBC1539.10.1">
    <property type="protein sequence ID" value="SPBC1539.10.1:pep"/>
    <property type="gene ID" value="SPBC1539.10"/>
</dbReference>
<dbReference type="GeneID" id="2539893"/>
<dbReference type="KEGG" id="spo:2539893"/>
<dbReference type="PomBase" id="SPBC1539.10">
    <property type="gene designation" value="nop16"/>
</dbReference>
<dbReference type="VEuPathDB" id="FungiDB:SPBC1539.10"/>
<dbReference type="eggNOG" id="KOG4771">
    <property type="taxonomic scope" value="Eukaryota"/>
</dbReference>
<dbReference type="HOGENOM" id="CLU_078857_0_0_1"/>
<dbReference type="InParanoid" id="Q9Y7Z1"/>
<dbReference type="OMA" id="MQQTEAD"/>
<dbReference type="PhylomeDB" id="Q9Y7Z1"/>
<dbReference type="PRO" id="PR:Q9Y7Z1"/>
<dbReference type="Proteomes" id="UP000002485">
    <property type="component" value="Chromosome II"/>
</dbReference>
<dbReference type="GO" id="GO:0005730">
    <property type="term" value="C:nucleolus"/>
    <property type="evidence" value="ECO:0007005"/>
    <property type="project" value="PomBase"/>
</dbReference>
<dbReference type="GO" id="GO:0005634">
    <property type="term" value="C:nucleus"/>
    <property type="evidence" value="ECO:0007005"/>
    <property type="project" value="PomBase"/>
</dbReference>
<dbReference type="GO" id="GO:0030684">
    <property type="term" value="C:preribosome"/>
    <property type="evidence" value="ECO:0000314"/>
    <property type="project" value="PomBase"/>
</dbReference>
<dbReference type="GO" id="GO:0030687">
    <property type="term" value="C:preribosome, large subunit precursor"/>
    <property type="evidence" value="ECO:0000266"/>
    <property type="project" value="PomBase"/>
</dbReference>
<dbReference type="GO" id="GO:1902626">
    <property type="term" value="P:assembly of large subunit precursor of preribosome"/>
    <property type="evidence" value="ECO:0000269"/>
    <property type="project" value="PomBase"/>
</dbReference>
<dbReference type="GO" id="GO:0042273">
    <property type="term" value="P:ribosomal large subunit biogenesis"/>
    <property type="evidence" value="ECO:0000318"/>
    <property type="project" value="GO_Central"/>
</dbReference>
<dbReference type="GO" id="GO:0006364">
    <property type="term" value="P:rRNA processing"/>
    <property type="evidence" value="ECO:0007669"/>
    <property type="project" value="UniProtKB-KW"/>
</dbReference>
<dbReference type="InterPro" id="IPR019002">
    <property type="entry name" value="Ribosome_biogenesis_Nop16"/>
</dbReference>
<dbReference type="PANTHER" id="PTHR13243">
    <property type="entry name" value="HSPC111 PROTEIN-RELATED"/>
    <property type="match status" value="1"/>
</dbReference>
<dbReference type="PANTHER" id="PTHR13243:SF1">
    <property type="entry name" value="NUCLEOLAR PROTEIN 16"/>
    <property type="match status" value="1"/>
</dbReference>
<dbReference type="Pfam" id="PF09420">
    <property type="entry name" value="Nop16"/>
    <property type="match status" value="1"/>
</dbReference>
<accession>Q9Y7Z1</accession>
<evidence type="ECO:0000250" key="1"/>
<evidence type="ECO:0000256" key="2">
    <source>
        <dbReference type="SAM" id="MobiDB-lite"/>
    </source>
</evidence>
<evidence type="ECO:0000305" key="3"/>
<evidence type="ECO:0007829" key="4">
    <source>
        <dbReference type="PDB" id="8EUY"/>
    </source>
</evidence>
<evidence type="ECO:0007829" key="5">
    <source>
        <dbReference type="PDB" id="8EV3"/>
    </source>
</evidence>
<organism>
    <name type="scientific">Schizosaccharomyces pombe (strain 972 / ATCC 24843)</name>
    <name type="common">Fission yeast</name>
    <dbReference type="NCBI Taxonomy" id="284812"/>
    <lineage>
        <taxon>Eukaryota</taxon>
        <taxon>Fungi</taxon>
        <taxon>Dikarya</taxon>
        <taxon>Ascomycota</taxon>
        <taxon>Taphrinomycotina</taxon>
        <taxon>Schizosaccharomycetes</taxon>
        <taxon>Schizosaccharomycetales</taxon>
        <taxon>Schizosaccharomycetaceae</taxon>
        <taxon>Schizosaccharomyces</taxon>
    </lineage>
</organism>
<gene>
    <name type="primary">nop16</name>
    <name type="ORF">SPBC1539.10</name>
</gene>
<sequence>MANPRQRNKQRSGKPRLTRRNANKKAKAKIYGNFVIQQNWDKHATLRQNYARLGLLATPNYVTGGVEKLYPDPKRENEDRELTSEELDELKKSLPPGQAIVRRDDDGNIIEIIHGEAKTLDDVLDKEISIAPAKTEVVRQLEEEAVKKAARQSNKMLPLSAFEHAYIQRLINKYGTEDFESMAKDVKLNSKLFNGSKLKNLYIRMKATK</sequence>
<proteinExistence type="evidence at protein level"/>
<name>NOP16_SCHPO</name>